<gene>
    <name evidence="7" type="primary">PCBP3</name>
    <name evidence="7" type="synonym">PCBP3-OT1</name>
    <name evidence="7" type="synonym">PCBP3OT</name>
</gene>
<name>PCBP3_HUMAN</name>
<proteinExistence type="evidence at protein level"/>
<reference key="1">
    <citation type="journal article" date="2000" name="Genomics">
        <title>Identification of two novel mammalian genes establishes a subfamily of KH-domain RNA-binding proteins.</title>
        <authorList>
            <person name="Makeyev A.V."/>
            <person name="Liebhaber S.A."/>
        </authorList>
    </citation>
    <scope>NUCLEOTIDE SEQUENCE [MRNA] (ISOFORM 1)</scope>
</reference>
<reference key="2">
    <citation type="journal article" date="2004" name="Nat. Genet.">
        <title>Complete sequencing and characterization of 21,243 full-length human cDNAs.</title>
        <authorList>
            <person name="Ota T."/>
            <person name="Suzuki Y."/>
            <person name="Nishikawa T."/>
            <person name="Otsuki T."/>
            <person name="Sugiyama T."/>
            <person name="Irie R."/>
            <person name="Wakamatsu A."/>
            <person name="Hayashi K."/>
            <person name="Sato H."/>
            <person name="Nagai K."/>
            <person name="Kimura K."/>
            <person name="Makita H."/>
            <person name="Sekine M."/>
            <person name="Obayashi M."/>
            <person name="Nishi T."/>
            <person name="Shibahara T."/>
            <person name="Tanaka T."/>
            <person name="Ishii S."/>
            <person name="Yamamoto J."/>
            <person name="Saito K."/>
            <person name="Kawai Y."/>
            <person name="Isono Y."/>
            <person name="Nakamura Y."/>
            <person name="Nagahari K."/>
            <person name="Murakami K."/>
            <person name="Yasuda T."/>
            <person name="Iwayanagi T."/>
            <person name="Wagatsuma M."/>
            <person name="Shiratori A."/>
            <person name="Sudo H."/>
            <person name="Hosoiri T."/>
            <person name="Kaku Y."/>
            <person name="Kodaira H."/>
            <person name="Kondo H."/>
            <person name="Sugawara M."/>
            <person name="Takahashi M."/>
            <person name="Kanda K."/>
            <person name="Yokoi T."/>
            <person name="Furuya T."/>
            <person name="Kikkawa E."/>
            <person name="Omura Y."/>
            <person name="Abe K."/>
            <person name="Kamihara K."/>
            <person name="Katsuta N."/>
            <person name="Sato K."/>
            <person name="Tanikawa M."/>
            <person name="Yamazaki M."/>
            <person name="Ninomiya K."/>
            <person name="Ishibashi T."/>
            <person name="Yamashita H."/>
            <person name="Murakawa K."/>
            <person name="Fujimori K."/>
            <person name="Tanai H."/>
            <person name="Kimata M."/>
            <person name="Watanabe M."/>
            <person name="Hiraoka S."/>
            <person name="Chiba Y."/>
            <person name="Ishida S."/>
            <person name="Ono Y."/>
            <person name="Takiguchi S."/>
            <person name="Watanabe S."/>
            <person name="Yosida M."/>
            <person name="Hotuta T."/>
            <person name="Kusano J."/>
            <person name="Kanehori K."/>
            <person name="Takahashi-Fujii A."/>
            <person name="Hara H."/>
            <person name="Tanase T.-O."/>
            <person name="Nomura Y."/>
            <person name="Togiya S."/>
            <person name="Komai F."/>
            <person name="Hara R."/>
            <person name="Takeuchi K."/>
            <person name="Arita M."/>
            <person name="Imose N."/>
            <person name="Musashino K."/>
            <person name="Yuuki H."/>
            <person name="Oshima A."/>
            <person name="Sasaki N."/>
            <person name="Aotsuka S."/>
            <person name="Yoshikawa Y."/>
            <person name="Matsunawa H."/>
            <person name="Ichihara T."/>
            <person name="Shiohata N."/>
            <person name="Sano S."/>
            <person name="Moriya S."/>
            <person name="Momiyama H."/>
            <person name="Satoh N."/>
            <person name="Takami S."/>
            <person name="Terashima Y."/>
            <person name="Suzuki O."/>
            <person name="Nakagawa S."/>
            <person name="Senoh A."/>
            <person name="Mizoguchi H."/>
            <person name="Goto Y."/>
            <person name="Shimizu F."/>
            <person name="Wakebe H."/>
            <person name="Hishigaki H."/>
            <person name="Watanabe T."/>
            <person name="Sugiyama A."/>
            <person name="Takemoto M."/>
            <person name="Kawakami B."/>
            <person name="Yamazaki M."/>
            <person name="Watanabe K."/>
            <person name="Kumagai A."/>
            <person name="Itakura S."/>
            <person name="Fukuzumi Y."/>
            <person name="Fujimori Y."/>
            <person name="Komiyama M."/>
            <person name="Tashiro H."/>
            <person name="Tanigami A."/>
            <person name="Fujiwara T."/>
            <person name="Ono T."/>
            <person name="Yamada K."/>
            <person name="Fujii Y."/>
            <person name="Ozaki K."/>
            <person name="Hirao M."/>
            <person name="Ohmori Y."/>
            <person name="Kawabata A."/>
            <person name="Hikiji T."/>
            <person name="Kobatake N."/>
            <person name="Inagaki H."/>
            <person name="Ikema Y."/>
            <person name="Okamoto S."/>
            <person name="Okitani R."/>
            <person name="Kawakami T."/>
            <person name="Noguchi S."/>
            <person name="Itoh T."/>
            <person name="Shigeta K."/>
            <person name="Senba T."/>
            <person name="Matsumura K."/>
            <person name="Nakajima Y."/>
            <person name="Mizuno T."/>
            <person name="Morinaga M."/>
            <person name="Sasaki M."/>
            <person name="Togashi T."/>
            <person name="Oyama M."/>
            <person name="Hata H."/>
            <person name="Watanabe M."/>
            <person name="Komatsu T."/>
            <person name="Mizushima-Sugano J."/>
            <person name="Satoh T."/>
            <person name="Shirai Y."/>
            <person name="Takahashi Y."/>
            <person name="Nakagawa K."/>
            <person name="Okumura K."/>
            <person name="Nagase T."/>
            <person name="Nomura N."/>
            <person name="Kikuchi H."/>
            <person name="Masuho Y."/>
            <person name="Yamashita R."/>
            <person name="Nakai K."/>
            <person name="Yada T."/>
            <person name="Nakamura Y."/>
            <person name="Ohara O."/>
            <person name="Isogai T."/>
            <person name="Sugano S."/>
        </authorList>
    </citation>
    <scope>NUCLEOTIDE SEQUENCE [LARGE SCALE MRNA] (ISOFORM 5)</scope>
    <source>
        <tissue>Cerebellum</tissue>
    </source>
</reference>
<reference key="3">
    <citation type="journal article" date="2000" name="Nature">
        <title>The DNA sequence of human chromosome 21.</title>
        <authorList>
            <person name="Hattori M."/>
            <person name="Fujiyama A."/>
            <person name="Taylor T.D."/>
            <person name="Watanabe H."/>
            <person name="Yada T."/>
            <person name="Park H.-S."/>
            <person name="Toyoda A."/>
            <person name="Ishii K."/>
            <person name="Totoki Y."/>
            <person name="Choi D.-K."/>
            <person name="Groner Y."/>
            <person name="Soeda E."/>
            <person name="Ohki M."/>
            <person name="Takagi T."/>
            <person name="Sakaki Y."/>
            <person name="Taudien S."/>
            <person name="Blechschmidt K."/>
            <person name="Polley A."/>
            <person name="Menzel U."/>
            <person name="Delabar J."/>
            <person name="Kumpf K."/>
            <person name="Lehmann R."/>
            <person name="Patterson D."/>
            <person name="Reichwald K."/>
            <person name="Rump A."/>
            <person name="Schillhabel M."/>
            <person name="Schudy A."/>
            <person name="Zimmermann W."/>
            <person name="Rosenthal A."/>
            <person name="Kudoh J."/>
            <person name="Shibuya K."/>
            <person name="Kawasaki K."/>
            <person name="Asakawa S."/>
            <person name="Shintani A."/>
            <person name="Sasaki T."/>
            <person name="Nagamine K."/>
            <person name="Mitsuyama S."/>
            <person name="Antonarakis S.E."/>
            <person name="Minoshima S."/>
            <person name="Shimizu N."/>
            <person name="Nordsiek G."/>
            <person name="Hornischer K."/>
            <person name="Brandt P."/>
            <person name="Scharfe M."/>
            <person name="Schoen O."/>
            <person name="Desario A."/>
            <person name="Reichelt J."/>
            <person name="Kauer G."/>
            <person name="Bloecker H."/>
            <person name="Ramser J."/>
            <person name="Beck A."/>
            <person name="Klages S."/>
            <person name="Hennig S."/>
            <person name="Riesselmann L."/>
            <person name="Dagand E."/>
            <person name="Wehrmeyer S."/>
            <person name="Borzym K."/>
            <person name="Gardiner K."/>
            <person name="Nizetic D."/>
            <person name="Francis F."/>
            <person name="Lehrach H."/>
            <person name="Reinhardt R."/>
            <person name="Yaspo M.-L."/>
        </authorList>
    </citation>
    <scope>NUCLEOTIDE SEQUENCE [LARGE SCALE GENOMIC DNA]</scope>
</reference>
<reference key="4">
    <citation type="journal article" date="2004" name="Genome Res.">
        <title>The status, quality, and expansion of the NIH full-length cDNA project: the Mammalian Gene Collection (MGC).</title>
        <authorList>
            <consortium name="The MGC Project Team"/>
        </authorList>
    </citation>
    <scope>NUCLEOTIDE SEQUENCE [LARGE SCALE MRNA] (ISOFORM 2)</scope>
    <source>
        <tissue>Lung</tissue>
    </source>
</reference>
<reference key="5">
    <citation type="journal article" date="2003" name="Mol. Cell. Biol.">
        <title>A novel set of nuclear localization signals determine distributions of the alphaCP RNA-binding proteins.</title>
        <authorList>
            <person name="Chkheidze A.N."/>
            <person name="Liebhaber S.A."/>
        </authorList>
    </citation>
    <scope>SUBCELLULAR LOCATION</scope>
</reference>
<keyword id="KW-0025">Alternative splicing</keyword>
<keyword id="KW-0963">Cytoplasm</keyword>
<keyword id="KW-0238">DNA-binding</keyword>
<keyword id="KW-1267">Proteomics identification</keyword>
<keyword id="KW-1185">Reference proteome</keyword>
<keyword id="KW-0677">Repeat</keyword>
<keyword id="KW-0687">Ribonucleoprotein</keyword>
<keyword id="KW-0694">RNA-binding</keyword>
<dbReference type="EMBL" id="AF176329">
    <property type="protein sequence ID" value="AAG09240.1"/>
    <property type="status" value="ALT_INIT"/>
    <property type="molecule type" value="mRNA"/>
</dbReference>
<dbReference type="EMBL" id="AK094301">
    <property type="protein sequence ID" value="BAC04327.2"/>
    <property type="status" value="ALT_INIT"/>
    <property type="molecule type" value="mRNA"/>
</dbReference>
<dbReference type="EMBL" id="AJ011931">
    <property type="status" value="NOT_ANNOTATED_CDS"/>
    <property type="molecule type" value="Genomic_DNA"/>
</dbReference>
<dbReference type="EMBL" id="AJ239328">
    <property type="status" value="NOT_ANNOTATED_CDS"/>
    <property type="molecule type" value="Genomic_DNA"/>
</dbReference>
<dbReference type="EMBL" id="AL133492">
    <property type="status" value="NOT_ANNOTATED_CDS"/>
    <property type="molecule type" value="Genomic_DNA"/>
</dbReference>
<dbReference type="EMBL" id="AL133493">
    <property type="status" value="NOT_ANNOTATED_CDS"/>
    <property type="molecule type" value="Genomic_DNA"/>
</dbReference>
<dbReference type="EMBL" id="AL592528">
    <property type="status" value="NOT_ANNOTATED_CDS"/>
    <property type="molecule type" value="Genomic_DNA"/>
</dbReference>
<dbReference type="EMBL" id="BC012061">
    <property type="protein sequence ID" value="AAH12061.1"/>
    <property type="status" value="ALT_INIT"/>
    <property type="molecule type" value="mRNA"/>
</dbReference>
<dbReference type="CCDS" id="CCDS42974.2">
    <molecule id="P57721-1"/>
</dbReference>
<dbReference type="CCDS" id="CCDS46652.1">
    <molecule id="P57721-2"/>
</dbReference>
<dbReference type="CCDS" id="CCDS86993.1">
    <molecule id="P57721-5"/>
</dbReference>
<dbReference type="CCDS" id="CCDS86994.1">
    <molecule id="P57721-4"/>
</dbReference>
<dbReference type="RefSeq" id="NP_001123613.1">
    <molecule id="P57721-2"/>
    <property type="nucleotide sequence ID" value="NM_001130141.2"/>
</dbReference>
<dbReference type="RefSeq" id="NP_001335167.1">
    <molecule id="P57721-4"/>
    <property type="nucleotide sequence ID" value="NM_001348238.2"/>
</dbReference>
<dbReference type="RefSeq" id="NP_001335171.1">
    <property type="nucleotide sequence ID" value="NM_001348242.1"/>
</dbReference>
<dbReference type="RefSeq" id="NP_001335173.1">
    <molecule id="P57721-5"/>
    <property type="nucleotide sequence ID" value="NM_001348244.2"/>
</dbReference>
<dbReference type="RefSeq" id="NP_001369206.1">
    <molecule id="P57721-1"/>
    <property type="nucleotide sequence ID" value="NM_001382277.1"/>
</dbReference>
<dbReference type="RefSeq" id="NP_001369207.1">
    <molecule id="P57721-4"/>
    <property type="nucleotide sequence ID" value="NM_001382278.1"/>
</dbReference>
<dbReference type="RefSeq" id="NP_001369210.1">
    <molecule id="P57721-1"/>
    <property type="nucleotide sequence ID" value="NM_001382281.1"/>
</dbReference>
<dbReference type="RefSeq" id="NP_001369211.1">
    <molecule id="P57721-1"/>
    <property type="nucleotide sequence ID" value="NM_001382282.1"/>
</dbReference>
<dbReference type="RefSeq" id="NP_001369212.1">
    <molecule id="P57721-1"/>
    <property type="nucleotide sequence ID" value="NM_001382283.1"/>
</dbReference>
<dbReference type="RefSeq" id="NP_001369213.1">
    <molecule id="P57721-1"/>
    <property type="nucleotide sequence ID" value="NM_001382284.1"/>
</dbReference>
<dbReference type="RefSeq" id="NP_001369214.1">
    <molecule id="P57721-1"/>
    <property type="nucleotide sequence ID" value="NM_001382285.1"/>
</dbReference>
<dbReference type="RefSeq" id="NP_001369215.1">
    <molecule id="P57721-1"/>
    <property type="nucleotide sequence ID" value="NM_001382286.1"/>
</dbReference>
<dbReference type="RefSeq" id="NP_001369216.1">
    <molecule id="P57721-1"/>
    <property type="nucleotide sequence ID" value="NM_001382287.1"/>
</dbReference>
<dbReference type="RefSeq" id="NP_001369217.1">
    <molecule id="P57721-1"/>
    <property type="nucleotide sequence ID" value="NM_001382288.1"/>
</dbReference>
<dbReference type="RefSeq" id="NP_001371085.1">
    <molecule id="P57721-1"/>
    <property type="nucleotide sequence ID" value="NM_001384156.1"/>
</dbReference>
<dbReference type="RefSeq" id="NP_065389.2">
    <molecule id="P57721-1"/>
    <property type="nucleotide sequence ID" value="NM_020528.3"/>
</dbReference>
<dbReference type="SMR" id="P57721"/>
<dbReference type="BioGRID" id="119851">
    <property type="interactions" value="146"/>
</dbReference>
<dbReference type="FunCoup" id="P57721">
    <property type="interactions" value="1580"/>
</dbReference>
<dbReference type="IntAct" id="P57721">
    <property type="interactions" value="85"/>
</dbReference>
<dbReference type="MINT" id="P57721"/>
<dbReference type="STRING" id="9606.ENSP00000383168"/>
<dbReference type="ChEMBL" id="CHEMBL5465293"/>
<dbReference type="GlyGen" id="P57721">
    <property type="glycosylation" value="1 site, 1 O-linked glycan (1 site)"/>
</dbReference>
<dbReference type="iPTMnet" id="P57721"/>
<dbReference type="MetOSite" id="P57721"/>
<dbReference type="PhosphoSitePlus" id="P57721"/>
<dbReference type="SwissPalm" id="P57721"/>
<dbReference type="BioMuta" id="PCBP3"/>
<dbReference type="DMDM" id="296439262"/>
<dbReference type="jPOST" id="P57721"/>
<dbReference type="MassIVE" id="P57721"/>
<dbReference type="PaxDb" id="9606-ENSP00000383168"/>
<dbReference type="PeptideAtlas" id="P57721"/>
<dbReference type="ProteomicsDB" id="57009">
    <molecule id="P57721-1"/>
</dbReference>
<dbReference type="ProteomicsDB" id="57010">
    <molecule id="P57721-2"/>
</dbReference>
<dbReference type="ProteomicsDB" id="57011">
    <molecule id="P57721-3"/>
</dbReference>
<dbReference type="ProteomicsDB" id="57012">
    <molecule id="P57721-4"/>
</dbReference>
<dbReference type="ProteomicsDB" id="57013">
    <molecule id="P57721-5"/>
</dbReference>
<dbReference type="Pumba" id="P57721"/>
<dbReference type="Antibodypedia" id="24497">
    <property type="antibodies" value="85 antibodies from 19 providers"/>
</dbReference>
<dbReference type="DNASU" id="54039"/>
<dbReference type="Ensembl" id="ENST00000400308.5">
    <molecule id="P57721-2"/>
    <property type="protein sequence ID" value="ENSP00000383163.1"/>
    <property type="gene ID" value="ENSG00000183570.17"/>
</dbReference>
<dbReference type="Ensembl" id="ENST00000400309.5">
    <molecule id="P57721-4"/>
    <property type="protein sequence ID" value="ENSP00000383164.1"/>
    <property type="gene ID" value="ENSG00000183570.17"/>
</dbReference>
<dbReference type="Ensembl" id="ENST00000400310.5">
    <molecule id="P57721-5"/>
    <property type="protein sequence ID" value="ENSP00000383165.1"/>
    <property type="gene ID" value="ENSG00000183570.17"/>
</dbReference>
<dbReference type="Ensembl" id="ENST00000400314.5">
    <molecule id="P57721-1"/>
    <property type="protein sequence ID" value="ENSP00000383168.1"/>
    <property type="gene ID" value="ENSG00000183570.17"/>
</dbReference>
<dbReference type="Ensembl" id="ENST00000681687.1">
    <molecule id="P57721-1"/>
    <property type="protein sequence ID" value="ENSP00000505796.1"/>
    <property type="gene ID" value="ENSG00000183570.17"/>
</dbReference>
<dbReference type="GeneID" id="54039"/>
<dbReference type="KEGG" id="hsa:54039"/>
<dbReference type="MANE-Select" id="ENST00000681687.1">
    <property type="protein sequence ID" value="ENSP00000505796.1"/>
    <property type="RefSeq nucleotide sequence ID" value="NM_001384156.1"/>
    <property type="RefSeq protein sequence ID" value="NP_001371085.1"/>
</dbReference>
<dbReference type="UCSC" id="uc002zhp.2">
    <molecule id="P57721-1"/>
    <property type="organism name" value="human"/>
</dbReference>
<dbReference type="AGR" id="HGNC:8651"/>
<dbReference type="CTD" id="54039"/>
<dbReference type="DisGeNET" id="54039"/>
<dbReference type="GeneCards" id="PCBP3"/>
<dbReference type="HGNC" id="HGNC:8651">
    <property type="gene designation" value="PCBP3"/>
</dbReference>
<dbReference type="HPA" id="ENSG00000183570">
    <property type="expression patterns" value="Tissue enhanced (brain, retina)"/>
</dbReference>
<dbReference type="MIM" id="608502">
    <property type="type" value="gene"/>
</dbReference>
<dbReference type="neXtProt" id="NX_P57721"/>
<dbReference type="OpenTargets" id="ENSG00000183570"/>
<dbReference type="PharmGKB" id="PA32990"/>
<dbReference type="VEuPathDB" id="HostDB:ENSG00000183570"/>
<dbReference type="eggNOG" id="KOG2190">
    <property type="taxonomic scope" value="Eukaryota"/>
</dbReference>
<dbReference type="GeneTree" id="ENSGT00940000162185"/>
<dbReference type="HOGENOM" id="CLU_022670_0_1_1"/>
<dbReference type="InParanoid" id="P57721"/>
<dbReference type="OrthoDB" id="442947at2759"/>
<dbReference type="PAN-GO" id="P57721">
    <property type="GO annotations" value="5 GO annotations based on evolutionary models"/>
</dbReference>
<dbReference type="PhylomeDB" id="P57721"/>
<dbReference type="TreeFam" id="TF318292"/>
<dbReference type="PathwayCommons" id="P57721"/>
<dbReference type="SignaLink" id="P57721"/>
<dbReference type="BioGRID-ORCS" id="54039">
    <property type="hits" value="15 hits in 1154 CRISPR screens"/>
</dbReference>
<dbReference type="CD-CODE" id="91857CE7">
    <property type="entry name" value="Nucleolus"/>
</dbReference>
<dbReference type="ChiTaRS" id="PCBP3">
    <property type="organism name" value="human"/>
</dbReference>
<dbReference type="GeneWiki" id="PCBP3"/>
<dbReference type="GenomeRNAi" id="54039"/>
<dbReference type="Pharos" id="P57721">
    <property type="development level" value="Tbio"/>
</dbReference>
<dbReference type="PRO" id="PR:P57721"/>
<dbReference type="Proteomes" id="UP000005640">
    <property type="component" value="Chromosome 21"/>
</dbReference>
<dbReference type="RNAct" id="P57721">
    <property type="molecule type" value="protein"/>
</dbReference>
<dbReference type="Bgee" id="ENSG00000183570">
    <property type="expression patterns" value="Expressed in right hemisphere of cerebellum and 101 other cell types or tissues"/>
</dbReference>
<dbReference type="ExpressionAtlas" id="P57721">
    <property type="expression patterns" value="baseline and differential"/>
</dbReference>
<dbReference type="GO" id="GO:0005737">
    <property type="term" value="C:cytoplasm"/>
    <property type="evidence" value="ECO:0000318"/>
    <property type="project" value="GO_Central"/>
</dbReference>
<dbReference type="GO" id="GO:0005829">
    <property type="term" value="C:cytosol"/>
    <property type="evidence" value="ECO:0007005"/>
    <property type="project" value="UniProtKB"/>
</dbReference>
<dbReference type="GO" id="GO:0070062">
    <property type="term" value="C:extracellular exosome"/>
    <property type="evidence" value="ECO:0007005"/>
    <property type="project" value="UniProtKB"/>
</dbReference>
<dbReference type="GO" id="GO:0005634">
    <property type="term" value="C:nucleus"/>
    <property type="evidence" value="ECO:0007005"/>
    <property type="project" value="UniProtKB"/>
</dbReference>
<dbReference type="GO" id="GO:1990904">
    <property type="term" value="C:ribonucleoprotein complex"/>
    <property type="evidence" value="ECO:0007669"/>
    <property type="project" value="UniProtKB-KW"/>
</dbReference>
<dbReference type="GO" id="GO:1990829">
    <property type="term" value="F:C-rich single-stranded DNA binding"/>
    <property type="evidence" value="ECO:0007669"/>
    <property type="project" value="Ensembl"/>
</dbReference>
<dbReference type="GO" id="GO:0003729">
    <property type="term" value="F:mRNA binding"/>
    <property type="evidence" value="ECO:0000318"/>
    <property type="project" value="GO_Central"/>
</dbReference>
<dbReference type="GO" id="GO:0003723">
    <property type="term" value="F:RNA binding"/>
    <property type="evidence" value="ECO:0007005"/>
    <property type="project" value="UniProtKB"/>
</dbReference>
<dbReference type="GO" id="GO:0016071">
    <property type="term" value="P:mRNA metabolic process"/>
    <property type="evidence" value="ECO:0000303"/>
    <property type="project" value="UniProtKB"/>
</dbReference>
<dbReference type="GO" id="GO:0000122">
    <property type="term" value="P:negative regulation of transcription by RNA polymerase II"/>
    <property type="evidence" value="ECO:0007669"/>
    <property type="project" value="Ensembl"/>
</dbReference>
<dbReference type="GO" id="GO:0006357">
    <property type="term" value="P:regulation of transcription by RNA polymerase II"/>
    <property type="evidence" value="ECO:0000318"/>
    <property type="project" value="GO_Central"/>
</dbReference>
<dbReference type="CDD" id="cd22516">
    <property type="entry name" value="KH-I_PCBP3_rpt1"/>
    <property type="match status" value="1"/>
</dbReference>
<dbReference type="CDD" id="cd22519">
    <property type="entry name" value="KH-I_PCBP3_rpt2"/>
    <property type="match status" value="1"/>
</dbReference>
<dbReference type="CDD" id="cd22522">
    <property type="entry name" value="KH-I_PCBP3_rpt3"/>
    <property type="match status" value="1"/>
</dbReference>
<dbReference type="FunFam" id="3.30.1370.10:FF:000002">
    <property type="entry name" value="poly(RC)-binding protein 2 isoform X1"/>
    <property type="match status" value="1"/>
</dbReference>
<dbReference type="FunFam" id="3.30.1370.10:FF:000003">
    <property type="entry name" value="poly(RC)-binding protein 2 isoform X1"/>
    <property type="match status" value="1"/>
</dbReference>
<dbReference type="FunFam" id="3.30.1370.10:FF:000005">
    <property type="entry name" value="poly(RC)-binding protein 2 isoform X1"/>
    <property type="match status" value="1"/>
</dbReference>
<dbReference type="Gene3D" id="3.30.1370.10">
    <property type="entry name" value="K Homology domain, type 1"/>
    <property type="match status" value="3"/>
</dbReference>
<dbReference type="InterPro" id="IPR004087">
    <property type="entry name" value="KH_dom"/>
</dbReference>
<dbReference type="InterPro" id="IPR004088">
    <property type="entry name" value="KH_dom_type_1"/>
</dbReference>
<dbReference type="InterPro" id="IPR036612">
    <property type="entry name" value="KH_dom_type_1_sf"/>
</dbReference>
<dbReference type="PANTHER" id="PTHR10288">
    <property type="entry name" value="KH DOMAIN CONTAINING RNA BINDING PROTEIN"/>
    <property type="match status" value="1"/>
</dbReference>
<dbReference type="Pfam" id="PF00013">
    <property type="entry name" value="KH_1"/>
    <property type="match status" value="3"/>
</dbReference>
<dbReference type="SMART" id="SM00322">
    <property type="entry name" value="KH"/>
    <property type="match status" value="3"/>
</dbReference>
<dbReference type="SUPFAM" id="SSF54791">
    <property type="entry name" value="Eukaryotic type KH-domain (KH-domain type I)"/>
    <property type="match status" value="3"/>
</dbReference>
<dbReference type="PROSITE" id="PS50084">
    <property type="entry name" value="KH_TYPE_1"/>
    <property type="match status" value="3"/>
</dbReference>
<evidence type="ECO:0000250" key="1"/>
<evidence type="ECO:0000255" key="2">
    <source>
        <dbReference type="PROSITE-ProRule" id="PRU00117"/>
    </source>
</evidence>
<evidence type="ECO:0000269" key="3">
    <source>
    </source>
</evidence>
<evidence type="ECO:0000303" key="4">
    <source>
    </source>
</evidence>
<evidence type="ECO:0000303" key="5">
    <source>
    </source>
</evidence>
<evidence type="ECO:0000305" key="6"/>
<evidence type="ECO:0000312" key="7">
    <source>
        <dbReference type="HGNC" id="HGNC:8651"/>
    </source>
</evidence>
<feature type="chain" id="PRO_0000050092" description="Poly(rC)-binding protein 3">
    <location>
        <begin position="1"/>
        <end position="371"/>
    </location>
</feature>
<feature type="domain" description="KH 1" evidence="2">
    <location>
        <begin position="45"/>
        <end position="95"/>
    </location>
</feature>
<feature type="domain" description="KH 2" evidence="2">
    <location>
        <begin position="129"/>
        <end position="182"/>
    </location>
</feature>
<feature type="domain" description="KH 3" evidence="2">
    <location>
        <begin position="293"/>
        <end position="357"/>
    </location>
</feature>
<feature type="splice variant" id="VSP_009947" description="In isoform 2 and isoform 3." evidence="5">
    <location>
        <begin position="201"/>
        <end position="225"/>
    </location>
</feature>
<feature type="splice variant" id="VSP_009948" description="In isoform 2 and isoform 4." evidence="5">
    <location>
        <position position="240"/>
    </location>
</feature>
<feature type="splice variant" id="VSP_010014" description="In isoform 5." evidence="4">
    <location>
        <begin position="267"/>
        <end position="286"/>
    </location>
</feature>
<protein>
    <recommendedName>
        <fullName>Poly(rC)-binding protein 3</fullName>
    </recommendedName>
    <alternativeName>
        <fullName>Alpha-CP3</fullName>
    </alternativeName>
    <alternativeName>
        <fullName evidence="7">PCBP3-overlapping transcript</fullName>
    </alternativeName>
    <alternativeName>
        <fullName evidence="7">PCBP3-overlapping transcript 1</fullName>
    </alternativeName>
</protein>
<accession>P57721</accession>
<accession>A8MPS2</accession>
<accession>A8MQ26</accession>
<accession>B7WNN9</accession>
<accession>B7WPC1</accession>
<accession>Q8N9K6</accession>
<accession>Q96EP6</accession>
<sequence length="371" mass="39465">MGEGDAFWAPSVLPHSTLSTLSHHPQPQFGRRMESKVSEGGLNVTLTIRLLMHGKEVGSIIGKKGETVKKMREESGARINISEGNCPERIVTITGPTDAIFKAFAMIAYKFEEDIINSMSNSPATSKPPVTLRLVVPASQCGSLIGKGGSKIKEIRESTGAQVQVAGDMLPNSTERAVTISGTPDAIIQCVKQICVVMLESPPKGATIPYRPKPASTPVIFAGGQAYTIQGQYAIPHPDQLTKLHQLAMQQTPFPPLGQTNPAFPGEKLPLHSSEEAQNLMGQSSGLDASPPASTHELTIPNDLIGCIIGRQGTKINEIRQMSGAQIKIANATEGSSERQITITGTPANISLAQYLINARLTSEVTGMGTL</sequence>
<organism>
    <name type="scientific">Homo sapiens</name>
    <name type="common">Human</name>
    <dbReference type="NCBI Taxonomy" id="9606"/>
    <lineage>
        <taxon>Eukaryota</taxon>
        <taxon>Metazoa</taxon>
        <taxon>Chordata</taxon>
        <taxon>Craniata</taxon>
        <taxon>Vertebrata</taxon>
        <taxon>Euteleostomi</taxon>
        <taxon>Mammalia</taxon>
        <taxon>Eutheria</taxon>
        <taxon>Euarchontoglires</taxon>
        <taxon>Primates</taxon>
        <taxon>Haplorrhini</taxon>
        <taxon>Catarrhini</taxon>
        <taxon>Hominidae</taxon>
        <taxon>Homo</taxon>
    </lineage>
</organism>
<comment type="function">
    <text evidence="1">Single-stranded nucleic acid binding protein that binds preferentially to oligo dC.</text>
</comment>
<comment type="interaction">
    <interactant intactId="EBI-11983983">
        <id>P57721-2</id>
    </interactant>
    <interactant intactId="EBI-12818201">
        <id>Q9BZC1-2</id>
        <label>CELF4</label>
    </interactant>
    <organismsDiffer>false</organismsDiffer>
    <experiments>3</experiments>
</comment>
<comment type="interaction">
    <interactant intactId="EBI-11983983">
        <id>P57721-2</id>
    </interactant>
    <interactant intactId="EBI-742054">
        <id>Q96D03</id>
        <label>DDIT4L</label>
    </interactant>
    <organismsDiffer>false</organismsDiffer>
    <experiments>3</experiments>
</comment>
<comment type="interaction">
    <interactant intactId="EBI-11983983">
        <id>P57721-2</id>
    </interactant>
    <interactant intactId="EBI-352602">
        <id>P43243</id>
        <label>MATR3</label>
    </interactant>
    <organismsDiffer>false</organismsDiffer>
    <experiments>3</experiments>
</comment>
<comment type="interaction">
    <interactant intactId="EBI-11983983">
        <id>P57721-2</id>
    </interactant>
    <interactant intactId="EBI-11529177">
        <id>Q9UHX1-2</id>
        <label>PUF60</label>
    </interactant>
    <organismsDiffer>false</organismsDiffer>
    <experiments>3</experiments>
</comment>
<comment type="interaction">
    <interactant intactId="EBI-11983983">
        <id>P57721-2</id>
    </interactant>
    <interactant intactId="EBI-2823850">
        <id>A0AV96</id>
        <label>RBM47</label>
    </interactant>
    <organismsDiffer>false</organismsDiffer>
    <experiments>3</experiments>
</comment>
<comment type="interaction">
    <interactant intactId="EBI-11983983">
        <id>P57721-2</id>
    </interactant>
    <interactant intactId="EBI-2340927">
        <id>P78317</id>
        <label>RNF4</label>
    </interactant>
    <organismsDiffer>false</organismsDiffer>
    <experiments>3</experiments>
</comment>
<comment type="interaction">
    <interactant intactId="EBI-11983983">
        <id>P57721-2</id>
    </interactant>
    <interactant intactId="EBI-607085">
        <id>P09012</id>
        <label>SNRPA</label>
    </interactant>
    <organismsDiffer>false</organismsDiffer>
    <experiments>5</experiments>
</comment>
<comment type="interaction">
    <interactant intactId="EBI-11983983">
        <id>P57721-2</id>
    </interactant>
    <interactant intactId="EBI-372557">
        <id>P84103</id>
        <label>SRSF3</label>
    </interactant>
    <organismsDiffer>false</organismsDiffer>
    <experiments>3</experiments>
</comment>
<comment type="subcellular location">
    <subcellularLocation>
        <location evidence="3">Cytoplasm</location>
    </subcellularLocation>
</comment>
<comment type="alternative products">
    <event type="alternative splicing"/>
    <isoform>
        <id>P57721-1</id>
        <name>1</name>
        <sequence type="displayed"/>
    </isoform>
    <isoform>
        <id>P57721-2</id>
        <name>2</name>
        <sequence type="described" ref="VSP_009947 VSP_009948"/>
    </isoform>
    <isoform>
        <id>P57721-3</id>
        <name>3</name>
        <sequence type="described" ref="VSP_009947"/>
    </isoform>
    <isoform>
        <id>P57721-4</id>
        <name>4</name>
        <sequence type="described" ref="VSP_009948"/>
    </isoform>
    <isoform>
        <id>P57721-5</id>
        <name>5</name>
        <sequence type="described" ref="VSP_010014"/>
    </isoform>
</comment>
<comment type="sequence caution" evidence="6">
    <conflict type="erroneous initiation">
        <sequence resource="EMBL-CDS" id="AAG09240"/>
    </conflict>
    <text>Truncated N-terminus.</text>
</comment>
<comment type="sequence caution" evidence="6">
    <conflict type="erroneous initiation">
        <sequence resource="EMBL-CDS" id="AAH12061"/>
    </conflict>
    <text>Truncated N-terminus.</text>
</comment>
<comment type="sequence caution" evidence="6">
    <conflict type="erroneous initiation">
        <sequence resource="EMBL-CDS" id="BAC04327"/>
    </conflict>
    <text>Truncated N-terminus.</text>
</comment>